<dbReference type="EC" id="3.1.-.-" evidence="1"/>
<dbReference type="EMBL" id="AAFI02000073">
    <property type="protein sequence ID" value="EAL64957.1"/>
    <property type="molecule type" value="Genomic_DNA"/>
</dbReference>
<dbReference type="RefSeq" id="XP_639977.1">
    <property type="nucleotide sequence ID" value="XM_634885.1"/>
</dbReference>
<dbReference type="SMR" id="Q54NU0"/>
<dbReference type="FunCoup" id="Q54NU0">
    <property type="interactions" value="1101"/>
</dbReference>
<dbReference type="STRING" id="44689.Q54NU0"/>
<dbReference type="PaxDb" id="44689-DDB0231109"/>
<dbReference type="EnsemblProtists" id="EAL64957">
    <property type="protein sequence ID" value="EAL64957"/>
    <property type="gene ID" value="DDB_G0284987"/>
</dbReference>
<dbReference type="GeneID" id="8624889"/>
<dbReference type="KEGG" id="ddi:DDB_G0284987"/>
<dbReference type="dictyBase" id="DDB_G0284987">
    <property type="gene designation" value="repG"/>
</dbReference>
<dbReference type="VEuPathDB" id="AmoebaDB:DDB_G0284987"/>
<dbReference type="eggNOG" id="KOG2519">
    <property type="taxonomic scope" value="Eukaryota"/>
</dbReference>
<dbReference type="HOGENOM" id="CLU_032444_2_0_1"/>
<dbReference type="InParanoid" id="Q54NU0"/>
<dbReference type="OMA" id="MGIPWVQ"/>
<dbReference type="PhylomeDB" id="Q54NU0"/>
<dbReference type="Reactome" id="R-DDI-110362">
    <property type="pathway name" value="POLB-Dependent Long Patch Base Excision Repair"/>
</dbReference>
<dbReference type="Reactome" id="R-DDI-5651801">
    <property type="pathway name" value="PCNA-Dependent Long Patch Base Excision Repair"/>
</dbReference>
<dbReference type="Reactome" id="R-DDI-69166">
    <property type="pathway name" value="Removal of the Flap Intermediate"/>
</dbReference>
<dbReference type="PRO" id="PR:Q54NU0"/>
<dbReference type="Proteomes" id="UP000002195">
    <property type="component" value="Chromosome 4"/>
</dbReference>
<dbReference type="GO" id="GO:0005739">
    <property type="term" value="C:mitochondrion"/>
    <property type="evidence" value="ECO:0007669"/>
    <property type="project" value="UniProtKB-SubCell"/>
</dbReference>
<dbReference type="GO" id="GO:0005730">
    <property type="term" value="C:nucleolus"/>
    <property type="evidence" value="ECO:0007669"/>
    <property type="project" value="UniProtKB-SubCell"/>
</dbReference>
<dbReference type="GO" id="GO:0005654">
    <property type="term" value="C:nucleoplasm"/>
    <property type="evidence" value="ECO:0007669"/>
    <property type="project" value="UniProtKB-SubCell"/>
</dbReference>
<dbReference type="GO" id="GO:0005634">
    <property type="term" value="C:nucleus"/>
    <property type="evidence" value="ECO:0000250"/>
    <property type="project" value="dictyBase"/>
</dbReference>
<dbReference type="GO" id="GO:0008409">
    <property type="term" value="F:5'-3' exonuclease activity"/>
    <property type="evidence" value="ECO:0000318"/>
    <property type="project" value="GO_Central"/>
</dbReference>
<dbReference type="GO" id="GO:0017108">
    <property type="term" value="F:5'-flap endonuclease activity"/>
    <property type="evidence" value="ECO:0000318"/>
    <property type="project" value="GO_Central"/>
</dbReference>
<dbReference type="GO" id="GO:0003677">
    <property type="term" value="F:DNA binding"/>
    <property type="evidence" value="ECO:0000250"/>
    <property type="project" value="dictyBase"/>
</dbReference>
<dbReference type="GO" id="GO:0004527">
    <property type="term" value="F:exonuclease activity"/>
    <property type="evidence" value="ECO:0000250"/>
    <property type="project" value="dictyBase"/>
</dbReference>
<dbReference type="GO" id="GO:0048256">
    <property type="term" value="F:flap endonuclease activity"/>
    <property type="evidence" value="ECO:0000250"/>
    <property type="project" value="dictyBase"/>
</dbReference>
<dbReference type="GO" id="GO:0000287">
    <property type="term" value="F:magnesium ion binding"/>
    <property type="evidence" value="ECO:0000250"/>
    <property type="project" value="dictyBase"/>
</dbReference>
<dbReference type="GO" id="GO:0030145">
    <property type="term" value="F:manganese ion binding"/>
    <property type="evidence" value="ECO:0000250"/>
    <property type="project" value="dictyBase"/>
</dbReference>
<dbReference type="GO" id="GO:0006284">
    <property type="term" value="P:base-excision repair"/>
    <property type="evidence" value="ECO:0007669"/>
    <property type="project" value="UniProtKB-UniRule"/>
</dbReference>
<dbReference type="GO" id="GO:0006281">
    <property type="term" value="P:DNA repair"/>
    <property type="evidence" value="ECO:0000250"/>
    <property type="project" value="dictyBase"/>
</dbReference>
<dbReference type="GO" id="GO:0006260">
    <property type="term" value="P:DNA replication"/>
    <property type="evidence" value="ECO:0000250"/>
    <property type="project" value="dictyBase"/>
</dbReference>
<dbReference type="GO" id="GO:0043137">
    <property type="term" value="P:DNA replication, removal of RNA primer"/>
    <property type="evidence" value="ECO:0007669"/>
    <property type="project" value="UniProtKB-UniRule"/>
</dbReference>
<dbReference type="CDD" id="cd09867">
    <property type="entry name" value="PIN_FEN1"/>
    <property type="match status" value="1"/>
</dbReference>
<dbReference type="FunFam" id="1.10.150.20:FF:000009">
    <property type="entry name" value="Flap endonuclease 1"/>
    <property type="match status" value="1"/>
</dbReference>
<dbReference type="FunFam" id="3.40.50.1010:FF:000016">
    <property type="entry name" value="Flap endonuclease 1"/>
    <property type="match status" value="1"/>
</dbReference>
<dbReference type="Gene3D" id="1.10.150.20">
    <property type="entry name" value="5' to 3' exonuclease, C-terminal subdomain"/>
    <property type="match status" value="1"/>
</dbReference>
<dbReference type="Gene3D" id="3.40.50.1010">
    <property type="entry name" value="5'-nuclease"/>
    <property type="match status" value="1"/>
</dbReference>
<dbReference type="HAMAP" id="MF_00614">
    <property type="entry name" value="Fen"/>
    <property type="match status" value="1"/>
</dbReference>
<dbReference type="InterPro" id="IPR036279">
    <property type="entry name" value="5-3_exonuclease_C_sf"/>
</dbReference>
<dbReference type="InterPro" id="IPR023426">
    <property type="entry name" value="Flap_endonuc"/>
</dbReference>
<dbReference type="InterPro" id="IPR008918">
    <property type="entry name" value="HhH2"/>
</dbReference>
<dbReference type="InterPro" id="IPR029060">
    <property type="entry name" value="PIN-like_dom_sf"/>
</dbReference>
<dbReference type="InterPro" id="IPR006086">
    <property type="entry name" value="XPG-I_dom"/>
</dbReference>
<dbReference type="InterPro" id="IPR006084">
    <property type="entry name" value="XPG/Rad2"/>
</dbReference>
<dbReference type="InterPro" id="IPR019974">
    <property type="entry name" value="XPG_CS"/>
</dbReference>
<dbReference type="InterPro" id="IPR006085">
    <property type="entry name" value="XPG_DNA_repair_N"/>
</dbReference>
<dbReference type="PANTHER" id="PTHR11081:SF9">
    <property type="entry name" value="FLAP ENDONUCLEASE 1"/>
    <property type="match status" value="1"/>
</dbReference>
<dbReference type="PANTHER" id="PTHR11081">
    <property type="entry name" value="FLAP ENDONUCLEASE FAMILY MEMBER"/>
    <property type="match status" value="1"/>
</dbReference>
<dbReference type="Pfam" id="PF00867">
    <property type="entry name" value="XPG_I"/>
    <property type="match status" value="1"/>
</dbReference>
<dbReference type="Pfam" id="PF00752">
    <property type="entry name" value="XPG_N"/>
    <property type="match status" value="1"/>
</dbReference>
<dbReference type="PRINTS" id="PR00853">
    <property type="entry name" value="XPGRADSUPER"/>
</dbReference>
<dbReference type="SMART" id="SM00279">
    <property type="entry name" value="HhH2"/>
    <property type="match status" value="1"/>
</dbReference>
<dbReference type="SMART" id="SM00484">
    <property type="entry name" value="XPGI"/>
    <property type="match status" value="1"/>
</dbReference>
<dbReference type="SMART" id="SM00485">
    <property type="entry name" value="XPGN"/>
    <property type="match status" value="1"/>
</dbReference>
<dbReference type="SUPFAM" id="SSF47807">
    <property type="entry name" value="5' to 3' exonuclease, C-terminal subdomain"/>
    <property type="match status" value="1"/>
</dbReference>
<dbReference type="SUPFAM" id="SSF88723">
    <property type="entry name" value="PIN domain-like"/>
    <property type="match status" value="1"/>
</dbReference>
<dbReference type="PROSITE" id="PS00841">
    <property type="entry name" value="XPG_1"/>
    <property type="match status" value="1"/>
</dbReference>
<keyword id="KW-0227">DNA damage</keyword>
<keyword id="KW-0234">DNA repair</keyword>
<keyword id="KW-0235">DNA replication</keyword>
<keyword id="KW-0255">Endonuclease</keyword>
<keyword id="KW-0269">Exonuclease</keyword>
<keyword id="KW-0378">Hydrolase</keyword>
<keyword id="KW-0460">Magnesium</keyword>
<keyword id="KW-0479">Metal-binding</keyword>
<keyword id="KW-0496">Mitochondrion</keyword>
<keyword id="KW-0540">Nuclease</keyword>
<keyword id="KW-0539">Nucleus</keyword>
<keyword id="KW-0597">Phosphoprotein</keyword>
<keyword id="KW-1185">Reference proteome</keyword>
<reference key="1">
    <citation type="journal article" date="2005" name="Nature">
        <title>The genome of the social amoeba Dictyostelium discoideum.</title>
        <authorList>
            <person name="Eichinger L."/>
            <person name="Pachebat J.A."/>
            <person name="Gloeckner G."/>
            <person name="Rajandream M.A."/>
            <person name="Sucgang R."/>
            <person name="Berriman M."/>
            <person name="Song J."/>
            <person name="Olsen R."/>
            <person name="Szafranski K."/>
            <person name="Xu Q."/>
            <person name="Tunggal B."/>
            <person name="Kummerfeld S."/>
            <person name="Madera M."/>
            <person name="Konfortov B.A."/>
            <person name="Rivero F."/>
            <person name="Bankier A.T."/>
            <person name="Lehmann R."/>
            <person name="Hamlin N."/>
            <person name="Davies R."/>
            <person name="Gaudet P."/>
            <person name="Fey P."/>
            <person name="Pilcher K."/>
            <person name="Chen G."/>
            <person name="Saunders D."/>
            <person name="Sodergren E.J."/>
            <person name="Davis P."/>
            <person name="Kerhornou A."/>
            <person name="Nie X."/>
            <person name="Hall N."/>
            <person name="Anjard C."/>
            <person name="Hemphill L."/>
            <person name="Bason N."/>
            <person name="Farbrother P."/>
            <person name="Desany B."/>
            <person name="Just E."/>
            <person name="Morio T."/>
            <person name="Rost R."/>
            <person name="Churcher C.M."/>
            <person name="Cooper J."/>
            <person name="Haydock S."/>
            <person name="van Driessche N."/>
            <person name="Cronin A."/>
            <person name="Goodhead I."/>
            <person name="Muzny D.M."/>
            <person name="Mourier T."/>
            <person name="Pain A."/>
            <person name="Lu M."/>
            <person name="Harper D."/>
            <person name="Lindsay R."/>
            <person name="Hauser H."/>
            <person name="James K.D."/>
            <person name="Quiles M."/>
            <person name="Madan Babu M."/>
            <person name="Saito T."/>
            <person name="Buchrieser C."/>
            <person name="Wardroper A."/>
            <person name="Felder M."/>
            <person name="Thangavelu M."/>
            <person name="Johnson D."/>
            <person name="Knights A."/>
            <person name="Loulseged H."/>
            <person name="Mungall K.L."/>
            <person name="Oliver K."/>
            <person name="Price C."/>
            <person name="Quail M.A."/>
            <person name="Urushihara H."/>
            <person name="Hernandez J."/>
            <person name="Rabbinowitsch E."/>
            <person name="Steffen D."/>
            <person name="Sanders M."/>
            <person name="Ma J."/>
            <person name="Kohara Y."/>
            <person name="Sharp S."/>
            <person name="Simmonds M.N."/>
            <person name="Spiegler S."/>
            <person name="Tivey A."/>
            <person name="Sugano S."/>
            <person name="White B."/>
            <person name="Walker D."/>
            <person name="Woodward J.R."/>
            <person name="Winckler T."/>
            <person name="Tanaka Y."/>
            <person name="Shaulsky G."/>
            <person name="Schleicher M."/>
            <person name="Weinstock G.M."/>
            <person name="Rosenthal A."/>
            <person name="Cox E.C."/>
            <person name="Chisholm R.L."/>
            <person name="Gibbs R.A."/>
            <person name="Loomis W.F."/>
            <person name="Platzer M."/>
            <person name="Kay R.R."/>
            <person name="Williams J.G."/>
            <person name="Dear P.H."/>
            <person name="Noegel A.A."/>
            <person name="Barrell B.G."/>
            <person name="Kuspa A."/>
        </authorList>
    </citation>
    <scope>NUCLEOTIDE SEQUENCE [LARGE SCALE GENOMIC DNA]</scope>
    <source>
        <strain>AX4</strain>
    </source>
</reference>
<accession>Q54NU0</accession>
<name>FEN1_DICDI</name>
<comment type="function">
    <text evidence="1">Structure-specific nuclease with 5'-flap endonuclease and 5'-3' exonuclease activities involved in DNA replication and repair. During DNA replication, cleaves the 5'-overhanging flap structure that is generated by displacement synthesis when DNA polymerase encounters the 5'-end of a downstream Okazaki fragment. It enters the flap from the 5'-end and then tracks to cleave the flap base, leaving a nick for ligation. Also involved in the long patch base excision repair (LP-BER) pathway, by cleaving within the apurinic/apyrimidinic (AP) site-terminated flap. Acts as a genome stabilization factor that prevents flaps from equilibrating into structures that lead to duplications and deletions. Also possesses 5'-3' exonuclease activity on nicked or gapped double-stranded DNA, and exhibits RNase H activity. Also involved in replication and repair of rDNA and in repairing mitochondrial DNA.</text>
</comment>
<comment type="cofactor">
    <cofactor evidence="1">
        <name>Mg(2+)</name>
        <dbReference type="ChEBI" id="CHEBI:18420"/>
    </cofactor>
    <text evidence="1">Binds 2 magnesium ions per subunit. They probably participate in the reaction catalyzed by the enzyme. May bind an additional third magnesium ion after substrate binding.</text>
</comment>
<comment type="subunit">
    <text evidence="1">Interacts with PCNA. Three molecules of repg bind to one PCNA trimer with each molecule binding to one PCNA monomer. PCNA stimulates the nuclease activity without altering cleavage specificity.</text>
</comment>
<comment type="subcellular location">
    <subcellularLocation>
        <location evidence="1">Nucleus</location>
        <location evidence="1">Nucleolus</location>
    </subcellularLocation>
    <subcellularLocation>
        <location evidence="1">Nucleus</location>
        <location evidence="1">Nucleoplasm</location>
    </subcellularLocation>
    <subcellularLocation>
        <location evidence="1">Mitochondrion</location>
    </subcellularLocation>
    <text evidence="1">Resides mostly in the nucleoli and relocalizes to the nucleoplasm upon DNA damage.</text>
</comment>
<comment type="PTM">
    <text evidence="1">Phosphorylated. Phosphorylation upon DNA damage induces relocalization to the nuclear plasma.</text>
</comment>
<comment type="similarity">
    <text evidence="1">Belongs to the XPG/RAD2 endonuclease family. FEN1 subfamily.</text>
</comment>
<protein>
    <recommendedName>
        <fullName evidence="1">Flap endonuclease 1</fullName>
        <shortName evidence="1">FEN-1</shortName>
        <ecNumber evidence="1">3.1.-.-</ecNumber>
    </recommendedName>
    <alternativeName>
        <fullName evidence="1">Flap structure-specific endonuclease 1</fullName>
    </alternativeName>
</protein>
<organism>
    <name type="scientific">Dictyostelium discoideum</name>
    <name type="common">Social amoeba</name>
    <dbReference type="NCBI Taxonomy" id="44689"/>
    <lineage>
        <taxon>Eukaryota</taxon>
        <taxon>Amoebozoa</taxon>
        <taxon>Evosea</taxon>
        <taxon>Eumycetozoa</taxon>
        <taxon>Dictyostelia</taxon>
        <taxon>Dictyosteliales</taxon>
        <taxon>Dictyosteliaceae</taxon>
        <taxon>Dictyostelium</taxon>
    </lineage>
</organism>
<gene>
    <name evidence="1" type="primary">repG</name>
    <name type="ORF">DDB_G0284987</name>
</gene>
<proteinExistence type="inferred from homology"/>
<evidence type="ECO:0000255" key="1">
    <source>
        <dbReference type="HAMAP-Rule" id="MF_03140"/>
    </source>
</evidence>
<evidence type="ECO:0000256" key="2">
    <source>
        <dbReference type="SAM" id="MobiDB-lite"/>
    </source>
</evidence>
<feature type="chain" id="PRO_0000403514" description="Flap endonuclease 1">
    <location>
        <begin position="1"/>
        <end position="384"/>
    </location>
</feature>
<feature type="region of interest" description="N-domain">
    <location>
        <begin position="1"/>
        <end position="105"/>
    </location>
</feature>
<feature type="region of interest" description="I-domain">
    <location>
        <begin position="123"/>
        <end position="254"/>
    </location>
</feature>
<feature type="region of interest" description="Interaction with PCNA" evidence="1">
    <location>
        <begin position="338"/>
        <end position="346"/>
    </location>
</feature>
<feature type="region of interest" description="Disordered" evidence="2">
    <location>
        <begin position="349"/>
        <end position="384"/>
    </location>
</feature>
<feature type="compositionally biased region" description="Low complexity" evidence="2">
    <location>
        <begin position="364"/>
        <end position="384"/>
    </location>
</feature>
<feature type="binding site" evidence="1">
    <location>
        <position position="34"/>
    </location>
    <ligand>
        <name>Mg(2+)</name>
        <dbReference type="ChEBI" id="CHEBI:18420"/>
        <label>1</label>
    </ligand>
</feature>
<feature type="binding site" evidence="1">
    <location>
        <position position="71"/>
    </location>
    <ligand>
        <name>DNA</name>
        <dbReference type="ChEBI" id="CHEBI:16991"/>
    </ligand>
</feature>
<feature type="binding site" evidence="1">
    <location>
        <position position="87"/>
    </location>
    <ligand>
        <name>Mg(2+)</name>
        <dbReference type="ChEBI" id="CHEBI:18420"/>
        <label>1</label>
    </ligand>
</feature>
<feature type="binding site" evidence="1">
    <location>
        <position position="159"/>
    </location>
    <ligand>
        <name>DNA</name>
        <dbReference type="ChEBI" id="CHEBI:16991"/>
    </ligand>
</feature>
<feature type="binding site" evidence="1">
    <location>
        <position position="159"/>
    </location>
    <ligand>
        <name>Mg(2+)</name>
        <dbReference type="ChEBI" id="CHEBI:18420"/>
        <label>1</label>
    </ligand>
</feature>
<feature type="binding site" evidence="1">
    <location>
        <position position="161"/>
    </location>
    <ligand>
        <name>Mg(2+)</name>
        <dbReference type="ChEBI" id="CHEBI:18420"/>
        <label>1</label>
    </ligand>
</feature>
<feature type="binding site" evidence="1">
    <location>
        <position position="180"/>
    </location>
    <ligand>
        <name>Mg(2+)</name>
        <dbReference type="ChEBI" id="CHEBI:18420"/>
        <label>2</label>
    </ligand>
</feature>
<feature type="binding site" evidence="1">
    <location>
        <position position="182"/>
    </location>
    <ligand>
        <name>Mg(2+)</name>
        <dbReference type="ChEBI" id="CHEBI:18420"/>
        <label>2</label>
    </ligand>
</feature>
<feature type="binding site" evidence="1">
    <location>
        <position position="232"/>
    </location>
    <ligand>
        <name>DNA</name>
        <dbReference type="ChEBI" id="CHEBI:16991"/>
    </ligand>
</feature>
<feature type="binding site" evidence="1">
    <location>
        <position position="234"/>
    </location>
    <ligand>
        <name>DNA</name>
        <dbReference type="ChEBI" id="CHEBI:16991"/>
    </ligand>
</feature>
<feature type="binding site" evidence="1">
    <location>
        <position position="234"/>
    </location>
    <ligand>
        <name>Mg(2+)</name>
        <dbReference type="ChEBI" id="CHEBI:18420"/>
        <label>2</label>
    </ligand>
</feature>
<sequence length="384" mass="43124">MGIKKLTDLIEDNAPTSIKTNILKNYFGRIIAIDASTSLYQFLIAMNADVSSALTNQLGETTSHLQGMFYRTIKLISRGIKPIYVFDGSAPVLKSGELAKRQARRKEAKENLKEATEVGTNEEVQKFAKRVITVTRKQNEDCIKLLTLMGVPIVKAPCEAEAQCAEIVKKGKAWATGSEDMDSLTLGSTVLLRRLFFSEAKKMPILEFELQSVLEGLGLTQDEFIDLSILLGCDYCDSIKGIGPKRAIELIQKHKSLEEVIKHLDKSKYPLPEFFPYPEVRELFKNPNVIPADQLPPFQWKDPDVEGLNKFLVEEMGFSDVRVAQGIEKLKKFKNTSVQSRMDSFITVIKKPEDPNDKKKKVTKTPSKPSAKTSKKSSSTFKRK</sequence>